<name>FABV_XANOP</name>
<proteinExistence type="inferred from homology"/>
<keyword id="KW-0275">Fatty acid biosynthesis</keyword>
<keyword id="KW-0276">Fatty acid metabolism</keyword>
<keyword id="KW-0444">Lipid biosynthesis</keyword>
<keyword id="KW-0443">Lipid metabolism</keyword>
<keyword id="KW-0520">NAD</keyword>
<keyword id="KW-0560">Oxidoreductase</keyword>
<dbReference type="EC" id="1.3.1.9" evidence="1"/>
<dbReference type="EMBL" id="CP000967">
    <property type="protein sequence ID" value="ACD56692.1"/>
    <property type="molecule type" value="Genomic_DNA"/>
</dbReference>
<dbReference type="RefSeq" id="WP_012443565.1">
    <property type="nucleotide sequence ID" value="NC_010717.2"/>
</dbReference>
<dbReference type="SMR" id="B2SUY7"/>
<dbReference type="KEGG" id="xop:PXO_03458"/>
<dbReference type="eggNOG" id="COG3007">
    <property type="taxonomic scope" value="Bacteria"/>
</dbReference>
<dbReference type="HOGENOM" id="CLU_057698_1_0_6"/>
<dbReference type="UniPathway" id="UPA00094"/>
<dbReference type="Proteomes" id="UP000001740">
    <property type="component" value="Chromosome"/>
</dbReference>
<dbReference type="GO" id="GO:0004318">
    <property type="term" value="F:enoyl-[acyl-carrier-protein] reductase (NADH) activity"/>
    <property type="evidence" value="ECO:0007669"/>
    <property type="project" value="UniProtKB-UniRule"/>
</dbReference>
<dbReference type="GO" id="GO:0051287">
    <property type="term" value="F:NAD binding"/>
    <property type="evidence" value="ECO:0007669"/>
    <property type="project" value="UniProtKB-UniRule"/>
</dbReference>
<dbReference type="GO" id="GO:0050343">
    <property type="term" value="F:trans-2-enoyl-CoA reductase (NADH) activity"/>
    <property type="evidence" value="ECO:0007669"/>
    <property type="project" value="TreeGrafter"/>
</dbReference>
<dbReference type="GO" id="GO:0006633">
    <property type="term" value="P:fatty acid biosynthetic process"/>
    <property type="evidence" value="ECO:0007669"/>
    <property type="project" value="UniProtKB-UniRule"/>
</dbReference>
<dbReference type="FunFam" id="3.40.50.720:FF:000221">
    <property type="entry name" value="Enoyl-[acyl-carrier-protein] reductase [NADH]"/>
    <property type="match status" value="1"/>
</dbReference>
<dbReference type="Gene3D" id="3.40.50.720">
    <property type="entry name" value="NAD(P)-binding Rossmann-like Domain"/>
    <property type="match status" value="1"/>
</dbReference>
<dbReference type="HAMAP" id="MF_01838">
    <property type="entry name" value="FabV_reductase"/>
    <property type="match status" value="1"/>
</dbReference>
<dbReference type="InterPro" id="IPR024906">
    <property type="entry name" value="Eno_Rdtase_FAD-bd_dom"/>
</dbReference>
<dbReference type="InterPro" id="IPR024910">
    <property type="entry name" value="Enoyl-CoA_Rdtase_cat_dom"/>
</dbReference>
<dbReference type="InterPro" id="IPR050048">
    <property type="entry name" value="FabV-like_NADH_b"/>
</dbReference>
<dbReference type="InterPro" id="IPR010758">
    <property type="entry name" value="Trans-2-enoyl-CoA_reductase"/>
</dbReference>
<dbReference type="NCBIfam" id="NF043048">
    <property type="entry name" value="EnoyACPredFabV"/>
    <property type="match status" value="1"/>
</dbReference>
<dbReference type="NCBIfam" id="NF010177">
    <property type="entry name" value="PRK13656.1"/>
    <property type="match status" value="1"/>
</dbReference>
<dbReference type="PANTHER" id="PTHR37480">
    <property type="entry name" value="ENOYL-[ACYL-CARRIER-PROTEIN] REDUCTASE [NADH]"/>
    <property type="match status" value="1"/>
</dbReference>
<dbReference type="PANTHER" id="PTHR37480:SF1">
    <property type="entry name" value="ENOYL-[ACYL-CARRIER-PROTEIN] REDUCTASE [NADH]"/>
    <property type="match status" value="1"/>
</dbReference>
<dbReference type="Pfam" id="PF07055">
    <property type="entry name" value="Eno-Rase_FAD_bd"/>
    <property type="match status" value="1"/>
</dbReference>
<dbReference type="Pfam" id="PF12242">
    <property type="entry name" value="Eno-Rase_NADH_b"/>
    <property type="match status" value="1"/>
</dbReference>
<dbReference type="Pfam" id="PF12241">
    <property type="entry name" value="Enoyl_reductase"/>
    <property type="match status" value="1"/>
</dbReference>
<accession>B2SUY7</accession>
<sequence>MIIHPKVRGFICTTTHPLGCERNVLEQIAATRARGVRNDGPKKVLVIGASSGYGLASRITAAFGFGADTLGVFFEKPGTASKAGTAGWYNSAAFDKHAKAAGLYSKSINGDAFSDAARAQVIELIKTEMGGQVDLVVYSLASPVRKLPGSGEVKRSALKPIGQTYTATAIDTNKDTIIQASIEPASAQEIEDTITVMGGQDWELWIDALEGAGVLADGARSVAFSYIGTEITWPIYWHGALGKAKVDLDRTAQRLNARLAKHGGGANVAVLKSVVTQASAAIPVMPLYISMVYKIMKEKGLHEGTIEQLDRLFRERLYRQDGQPAEVDEVDEQNRLRLDDWELRDDVQDACKALWPQVTTENLFELTDYAGYKHEFLKLFGFGRTDVDYDADVATDVAFDCIELV</sequence>
<comment type="function">
    <text evidence="1">Involved in the final reduction of the elongation cycle of fatty acid synthesis (FAS II). Catalyzes the reduction of a carbon-carbon double bond in an enoyl moiety that is covalently linked to an acyl carrier protein (ACP).</text>
</comment>
<comment type="catalytic activity">
    <reaction evidence="1">
        <text>a 2,3-saturated acyl-[ACP] + NAD(+) = a (2E)-enoyl-[ACP] + NADH + H(+)</text>
        <dbReference type="Rhea" id="RHEA:10240"/>
        <dbReference type="Rhea" id="RHEA-COMP:9925"/>
        <dbReference type="Rhea" id="RHEA-COMP:9926"/>
        <dbReference type="ChEBI" id="CHEBI:15378"/>
        <dbReference type="ChEBI" id="CHEBI:57540"/>
        <dbReference type="ChEBI" id="CHEBI:57945"/>
        <dbReference type="ChEBI" id="CHEBI:78784"/>
        <dbReference type="ChEBI" id="CHEBI:78785"/>
        <dbReference type="EC" id="1.3.1.9"/>
    </reaction>
</comment>
<comment type="pathway">
    <text evidence="1">Lipid metabolism; fatty acid biosynthesis.</text>
</comment>
<comment type="subunit">
    <text evidence="1">Monomer.</text>
</comment>
<comment type="similarity">
    <text evidence="1">Belongs to the TER reductase family.</text>
</comment>
<feature type="chain" id="PRO_1000188372" description="Enoyl-[acyl-carrier-protein] reductase [NADH]">
    <location>
        <begin position="1"/>
        <end position="405"/>
    </location>
</feature>
<feature type="active site" description="Proton donor" evidence="1">
    <location>
        <position position="236"/>
    </location>
</feature>
<feature type="binding site" evidence="1">
    <location>
        <begin position="48"/>
        <end position="53"/>
    </location>
    <ligand>
        <name>NAD(+)</name>
        <dbReference type="ChEBI" id="CHEBI:57540"/>
    </ligand>
</feature>
<feature type="binding site" evidence="1">
    <location>
        <begin position="74"/>
        <end position="75"/>
    </location>
    <ligand>
        <name>NAD(+)</name>
        <dbReference type="ChEBI" id="CHEBI:57540"/>
    </ligand>
</feature>
<feature type="binding site" evidence="1">
    <location>
        <begin position="111"/>
        <end position="112"/>
    </location>
    <ligand>
        <name>NAD(+)</name>
        <dbReference type="ChEBI" id="CHEBI:57540"/>
    </ligand>
</feature>
<feature type="binding site" evidence="1">
    <location>
        <begin position="140"/>
        <end position="141"/>
    </location>
    <ligand>
        <name>NAD(+)</name>
        <dbReference type="ChEBI" id="CHEBI:57540"/>
    </ligand>
</feature>
<feature type="binding site" evidence="1">
    <location>
        <position position="226"/>
    </location>
    <ligand>
        <name>substrate</name>
    </ligand>
</feature>
<feature type="binding site" evidence="1">
    <location>
        <position position="245"/>
    </location>
    <ligand>
        <name>NAD(+)</name>
        <dbReference type="ChEBI" id="CHEBI:57540"/>
    </ligand>
</feature>
<feature type="binding site" evidence="1">
    <location>
        <begin position="274"/>
        <end position="276"/>
    </location>
    <ligand>
        <name>NAD(+)</name>
        <dbReference type="ChEBI" id="CHEBI:57540"/>
    </ligand>
</feature>
<feature type="site" description="Plays an important role in discriminating NADH against NADPH" evidence="1">
    <location>
        <position position="75"/>
    </location>
</feature>
<evidence type="ECO:0000255" key="1">
    <source>
        <dbReference type="HAMAP-Rule" id="MF_01838"/>
    </source>
</evidence>
<gene>
    <name evidence="1" type="primary">fabV</name>
    <name type="ordered locus">PXO_03458</name>
</gene>
<organism>
    <name type="scientific">Xanthomonas oryzae pv. oryzae (strain PXO99A)</name>
    <dbReference type="NCBI Taxonomy" id="360094"/>
    <lineage>
        <taxon>Bacteria</taxon>
        <taxon>Pseudomonadati</taxon>
        <taxon>Pseudomonadota</taxon>
        <taxon>Gammaproteobacteria</taxon>
        <taxon>Lysobacterales</taxon>
        <taxon>Lysobacteraceae</taxon>
        <taxon>Xanthomonas</taxon>
    </lineage>
</organism>
<protein>
    <recommendedName>
        <fullName evidence="1">Enoyl-[acyl-carrier-protein] reductase [NADH]</fullName>
        <shortName evidence="1">ENR</shortName>
        <ecNumber evidence="1">1.3.1.9</ecNumber>
    </recommendedName>
</protein>
<reference key="1">
    <citation type="journal article" date="2008" name="BMC Genomics">
        <title>Genome sequence and rapid evolution of the rice pathogen Xanthomonas oryzae pv. oryzae PXO99A.</title>
        <authorList>
            <person name="Salzberg S.L."/>
            <person name="Sommer D.D."/>
            <person name="Schatz M.C."/>
            <person name="Phillippy A.M."/>
            <person name="Rabinowicz P.D."/>
            <person name="Tsuge S."/>
            <person name="Furutani A."/>
            <person name="Ochiai H."/>
            <person name="Delcher A.L."/>
            <person name="Kelley D."/>
            <person name="Madupu R."/>
            <person name="Puiu D."/>
            <person name="Radune D."/>
            <person name="Shumway M."/>
            <person name="Trapnell C."/>
            <person name="Aparna G."/>
            <person name="Jha G."/>
            <person name="Pandey A."/>
            <person name="Patil P.B."/>
            <person name="Ishihara H."/>
            <person name="Meyer D.F."/>
            <person name="Szurek B."/>
            <person name="Verdier V."/>
            <person name="Koebnik R."/>
            <person name="Dow J.M."/>
            <person name="Ryan R.P."/>
            <person name="Hirata H."/>
            <person name="Tsuyumu S."/>
            <person name="Won Lee S."/>
            <person name="Seo Y.-S."/>
            <person name="Sriariyanum M."/>
            <person name="Ronald P.C."/>
            <person name="Sonti R.V."/>
            <person name="Van Sluys M.-A."/>
            <person name="Leach J.E."/>
            <person name="White F.F."/>
            <person name="Bogdanove A.J."/>
        </authorList>
    </citation>
    <scope>NUCLEOTIDE SEQUENCE [LARGE SCALE GENOMIC DNA]</scope>
    <source>
        <strain>PXO99A</strain>
    </source>
</reference>